<protein>
    <recommendedName>
        <fullName evidence="1">Ribonuclease 3</fullName>
        <ecNumber evidence="1">3.1.26.3</ecNumber>
    </recommendedName>
    <alternativeName>
        <fullName evidence="1">Ribonuclease III</fullName>
        <shortName evidence="1">RNase III</shortName>
    </alternativeName>
</protein>
<sequence>MSKQKKSEIVNRFRKRFDTKMTELGFTYQNIDLYQQAFSHSSFINDFNMNRLDHNERLEFLGDAVLELTVSRYLFDKHPNLPEGNLTKMRATIVCEPSLVIFANKIGLNEMILLGKGEEKTGGRTRPSLISDAFEAFIGALYLDQGLDIVWKFAEKVIFPHVEQNELLGVVDFKTQFQEYVHQQNKGDVTYNLIKEEGPAHHRLFTSEVILQGEAIAEGKGKTKKESEQRAAESAYKQLKQIK</sequence>
<organism>
    <name type="scientific">Staphylococcus aureus (strain MW2)</name>
    <dbReference type="NCBI Taxonomy" id="196620"/>
    <lineage>
        <taxon>Bacteria</taxon>
        <taxon>Bacillati</taxon>
        <taxon>Bacillota</taxon>
        <taxon>Bacilli</taxon>
        <taxon>Bacillales</taxon>
        <taxon>Staphylococcaceae</taxon>
        <taxon>Staphylococcus</taxon>
    </lineage>
</organism>
<gene>
    <name evidence="1" type="primary">rnc</name>
    <name type="ordered locus">MW1116</name>
</gene>
<keyword id="KW-0963">Cytoplasm</keyword>
<keyword id="KW-0255">Endonuclease</keyword>
<keyword id="KW-0378">Hydrolase</keyword>
<keyword id="KW-0460">Magnesium</keyword>
<keyword id="KW-0479">Metal-binding</keyword>
<keyword id="KW-0507">mRNA processing</keyword>
<keyword id="KW-0540">Nuclease</keyword>
<keyword id="KW-0694">RNA-binding</keyword>
<keyword id="KW-0698">rRNA processing</keyword>
<keyword id="KW-0699">rRNA-binding</keyword>
<keyword id="KW-0819">tRNA processing</keyword>
<accession>P66669</accession>
<accession>Q99UN7</accession>
<feature type="chain" id="PRO_0000180437" description="Ribonuclease 3">
    <location>
        <begin position="1"/>
        <end position="243"/>
    </location>
</feature>
<feature type="domain" description="RNase III" evidence="1">
    <location>
        <begin position="10"/>
        <end position="146"/>
    </location>
</feature>
<feature type="domain" description="DRBM" evidence="1">
    <location>
        <begin position="172"/>
        <end position="241"/>
    </location>
</feature>
<feature type="region of interest" description="Disordered" evidence="2">
    <location>
        <begin position="219"/>
        <end position="243"/>
    </location>
</feature>
<feature type="compositionally biased region" description="Basic and acidic residues" evidence="2">
    <location>
        <begin position="219"/>
        <end position="231"/>
    </location>
</feature>
<feature type="active site" evidence="1">
    <location>
        <position position="63"/>
    </location>
</feature>
<feature type="active site" evidence="1">
    <location>
        <position position="135"/>
    </location>
</feature>
<feature type="binding site" evidence="1">
    <location>
        <position position="59"/>
    </location>
    <ligand>
        <name>Mg(2+)</name>
        <dbReference type="ChEBI" id="CHEBI:18420"/>
    </ligand>
</feature>
<feature type="binding site" evidence="1">
    <location>
        <position position="132"/>
    </location>
    <ligand>
        <name>Mg(2+)</name>
        <dbReference type="ChEBI" id="CHEBI:18420"/>
    </ligand>
</feature>
<feature type="binding site" evidence="1">
    <location>
        <position position="135"/>
    </location>
    <ligand>
        <name>Mg(2+)</name>
        <dbReference type="ChEBI" id="CHEBI:18420"/>
    </ligand>
</feature>
<proteinExistence type="inferred from homology"/>
<name>RNC_STAAW</name>
<evidence type="ECO:0000255" key="1">
    <source>
        <dbReference type="HAMAP-Rule" id="MF_00104"/>
    </source>
</evidence>
<evidence type="ECO:0000256" key="2">
    <source>
        <dbReference type="SAM" id="MobiDB-lite"/>
    </source>
</evidence>
<dbReference type="EC" id="3.1.26.3" evidence="1"/>
<dbReference type="EMBL" id="BA000033">
    <property type="protein sequence ID" value="BAB94981.1"/>
    <property type="molecule type" value="Genomic_DNA"/>
</dbReference>
<dbReference type="RefSeq" id="WP_000043237.1">
    <property type="nucleotide sequence ID" value="NC_003923.1"/>
</dbReference>
<dbReference type="SMR" id="P66669"/>
<dbReference type="KEGG" id="sam:MW1116"/>
<dbReference type="HOGENOM" id="CLU_000907_1_3_9"/>
<dbReference type="GO" id="GO:0005737">
    <property type="term" value="C:cytoplasm"/>
    <property type="evidence" value="ECO:0007669"/>
    <property type="project" value="UniProtKB-SubCell"/>
</dbReference>
<dbReference type="GO" id="GO:0003725">
    <property type="term" value="F:double-stranded RNA binding"/>
    <property type="evidence" value="ECO:0007669"/>
    <property type="project" value="TreeGrafter"/>
</dbReference>
<dbReference type="GO" id="GO:0046872">
    <property type="term" value="F:metal ion binding"/>
    <property type="evidence" value="ECO:0007669"/>
    <property type="project" value="UniProtKB-KW"/>
</dbReference>
<dbReference type="GO" id="GO:0004525">
    <property type="term" value="F:ribonuclease III activity"/>
    <property type="evidence" value="ECO:0007669"/>
    <property type="project" value="UniProtKB-UniRule"/>
</dbReference>
<dbReference type="GO" id="GO:0019843">
    <property type="term" value="F:rRNA binding"/>
    <property type="evidence" value="ECO:0007669"/>
    <property type="project" value="UniProtKB-KW"/>
</dbReference>
<dbReference type="GO" id="GO:0006397">
    <property type="term" value="P:mRNA processing"/>
    <property type="evidence" value="ECO:0007669"/>
    <property type="project" value="UniProtKB-UniRule"/>
</dbReference>
<dbReference type="GO" id="GO:0010468">
    <property type="term" value="P:regulation of gene expression"/>
    <property type="evidence" value="ECO:0007669"/>
    <property type="project" value="TreeGrafter"/>
</dbReference>
<dbReference type="GO" id="GO:0006364">
    <property type="term" value="P:rRNA processing"/>
    <property type="evidence" value="ECO:0007669"/>
    <property type="project" value="UniProtKB-UniRule"/>
</dbReference>
<dbReference type="GO" id="GO:0008033">
    <property type="term" value="P:tRNA processing"/>
    <property type="evidence" value="ECO:0007669"/>
    <property type="project" value="UniProtKB-KW"/>
</dbReference>
<dbReference type="CDD" id="cd10845">
    <property type="entry name" value="DSRM_RNAse_III_family"/>
    <property type="match status" value="1"/>
</dbReference>
<dbReference type="CDD" id="cd00593">
    <property type="entry name" value="RIBOc"/>
    <property type="match status" value="1"/>
</dbReference>
<dbReference type="FunFam" id="1.10.1520.10:FF:000001">
    <property type="entry name" value="Ribonuclease 3"/>
    <property type="match status" value="1"/>
</dbReference>
<dbReference type="FunFam" id="3.30.160.20:FF:000003">
    <property type="entry name" value="Ribonuclease 3"/>
    <property type="match status" value="1"/>
</dbReference>
<dbReference type="Gene3D" id="3.30.160.20">
    <property type="match status" value="1"/>
</dbReference>
<dbReference type="Gene3D" id="1.10.1520.10">
    <property type="entry name" value="Ribonuclease III domain"/>
    <property type="match status" value="1"/>
</dbReference>
<dbReference type="HAMAP" id="MF_00104">
    <property type="entry name" value="RNase_III"/>
    <property type="match status" value="1"/>
</dbReference>
<dbReference type="InterPro" id="IPR014720">
    <property type="entry name" value="dsRBD_dom"/>
</dbReference>
<dbReference type="InterPro" id="IPR011907">
    <property type="entry name" value="RNase_III"/>
</dbReference>
<dbReference type="InterPro" id="IPR000999">
    <property type="entry name" value="RNase_III_dom"/>
</dbReference>
<dbReference type="InterPro" id="IPR036389">
    <property type="entry name" value="RNase_III_sf"/>
</dbReference>
<dbReference type="NCBIfam" id="TIGR02191">
    <property type="entry name" value="RNaseIII"/>
    <property type="match status" value="1"/>
</dbReference>
<dbReference type="PANTHER" id="PTHR11207:SF0">
    <property type="entry name" value="RIBONUCLEASE 3"/>
    <property type="match status" value="1"/>
</dbReference>
<dbReference type="PANTHER" id="PTHR11207">
    <property type="entry name" value="RIBONUCLEASE III"/>
    <property type="match status" value="1"/>
</dbReference>
<dbReference type="Pfam" id="PF00035">
    <property type="entry name" value="dsrm"/>
    <property type="match status" value="1"/>
</dbReference>
<dbReference type="Pfam" id="PF14622">
    <property type="entry name" value="Ribonucleas_3_3"/>
    <property type="match status" value="1"/>
</dbReference>
<dbReference type="SMART" id="SM00358">
    <property type="entry name" value="DSRM"/>
    <property type="match status" value="1"/>
</dbReference>
<dbReference type="SMART" id="SM00535">
    <property type="entry name" value="RIBOc"/>
    <property type="match status" value="1"/>
</dbReference>
<dbReference type="SUPFAM" id="SSF54768">
    <property type="entry name" value="dsRNA-binding domain-like"/>
    <property type="match status" value="1"/>
</dbReference>
<dbReference type="SUPFAM" id="SSF69065">
    <property type="entry name" value="RNase III domain-like"/>
    <property type="match status" value="1"/>
</dbReference>
<dbReference type="PROSITE" id="PS50137">
    <property type="entry name" value="DS_RBD"/>
    <property type="match status" value="1"/>
</dbReference>
<dbReference type="PROSITE" id="PS00517">
    <property type="entry name" value="RNASE_3_1"/>
    <property type="match status" value="1"/>
</dbReference>
<dbReference type="PROSITE" id="PS50142">
    <property type="entry name" value="RNASE_3_2"/>
    <property type="match status" value="1"/>
</dbReference>
<reference key="1">
    <citation type="journal article" date="2002" name="Lancet">
        <title>Genome and virulence determinants of high virulence community-acquired MRSA.</title>
        <authorList>
            <person name="Baba T."/>
            <person name="Takeuchi F."/>
            <person name="Kuroda M."/>
            <person name="Yuzawa H."/>
            <person name="Aoki K."/>
            <person name="Oguchi A."/>
            <person name="Nagai Y."/>
            <person name="Iwama N."/>
            <person name="Asano K."/>
            <person name="Naimi T."/>
            <person name="Kuroda H."/>
            <person name="Cui L."/>
            <person name="Yamamoto K."/>
            <person name="Hiramatsu K."/>
        </authorList>
    </citation>
    <scope>NUCLEOTIDE SEQUENCE [LARGE SCALE GENOMIC DNA]</scope>
    <source>
        <strain>MW2</strain>
    </source>
</reference>
<comment type="function">
    <text evidence="1">Digests double-stranded RNA. Involved in the processing of primary rRNA transcript to yield the immediate precursors to the large and small rRNAs (23S and 16S). Processes some mRNAs, and tRNAs when they are encoded in the rRNA operon. Processes pre-crRNA and tracrRNA of type II CRISPR loci if present in the organism.</text>
</comment>
<comment type="catalytic activity">
    <reaction evidence="1">
        <text>Endonucleolytic cleavage to 5'-phosphomonoester.</text>
        <dbReference type="EC" id="3.1.26.3"/>
    </reaction>
</comment>
<comment type="cofactor">
    <cofactor evidence="1">
        <name>Mg(2+)</name>
        <dbReference type="ChEBI" id="CHEBI:18420"/>
    </cofactor>
</comment>
<comment type="subunit">
    <text evidence="1">Homodimer.</text>
</comment>
<comment type="subcellular location">
    <subcellularLocation>
        <location evidence="1">Cytoplasm</location>
    </subcellularLocation>
</comment>
<comment type="similarity">
    <text evidence="1">Belongs to the ribonuclease III family.</text>
</comment>